<reference key="1">
    <citation type="submission" date="2008-10" db="EMBL/GenBank/DDBJ databases">
        <title>Genome sequence of Bacillus anthracis str. CDC 684.</title>
        <authorList>
            <person name="Dodson R.J."/>
            <person name="Munk A.C."/>
            <person name="Brettin T."/>
            <person name="Bruce D."/>
            <person name="Detter C."/>
            <person name="Tapia R."/>
            <person name="Han C."/>
            <person name="Sutton G."/>
            <person name="Sims D."/>
        </authorList>
    </citation>
    <scope>NUCLEOTIDE SEQUENCE [LARGE SCALE GENOMIC DNA]</scope>
    <source>
        <strain>CDC 684 / NRRL 3495</strain>
    </source>
</reference>
<feature type="chain" id="PRO_1000148319" description="Protein SprT-like">
    <location>
        <begin position="1"/>
        <end position="152"/>
    </location>
</feature>
<feature type="domain" description="SprT-like" evidence="1">
    <location>
        <begin position="7"/>
        <end position="148"/>
    </location>
</feature>
<feature type="active site" evidence="1">
    <location>
        <position position="68"/>
    </location>
</feature>
<feature type="binding site" evidence="1">
    <location>
        <position position="67"/>
    </location>
    <ligand>
        <name>Zn(2+)</name>
        <dbReference type="ChEBI" id="CHEBI:29105"/>
    </ligand>
</feature>
<feature type="binding site" evidence="1">
    <location>
        <position position="71"/>
    </location>
    <ligand>
        <name>Zn(2+)</name>
        <dbReference type="ChEBI" id="CHEBI:29105"/>
    </ligand>
</feature>
<keyword id="KW-0963">Cytoplasm</keyword>
<keyword id="KW-0479">Metal-binding</keyword>
<keyword id="KW-0862">Zinc</keyword>
<proteinExistence type="inferred from homology"/>
<gene>
    <name type="ordered locus">BAMEG_0285</name>
</gene>
<dbReference type="EMBL" id="CP001215">
    <property type="protein sequence ID" value="ACP14581.1"/>
    <property type="molecule type" value="Genomic_DNA"/>
</dbReference>
<dbReference type="RefSeq" id="WP_000344248.1">
    <property type="nucleotide sequence ID" value="NC_012581.1"/>
</dbReference>
<dbReference type="KEGG" id="bah:BAMEG_0285"/>
<dbReference type="HOGENOM" id="CLU_123820_0_0_9"/>
<dbReference type="GO" id="GO:0005737">
    <property type="term" value="C:cytoplasm"/>
    <property type="evidence" value="ECO:0007669"/>
    <property type="project" value="UniProtKB-SubCell"/>
</dbReference>
<dbReference type="GO" id="GO:0008270">
    <property type="term" value="F:zinc ion binding"/>
    <property type="evidence" value="ECO:0007669"/>
    <property type="project" value="UniProtKB-UniRule"/>
</dbReference>
<dbReference type="GO" id="GO:0006950">
    <property type="term" value="P:response to stress"/>
    <property type="evidence" value="ECO:0007669"/>
    <property type="project" value="UniProtKB-ARBA"/>
</dbReference>
<dbReference type="HAMAP" id="MF_00745">
    <property type="entry name" value="SprT_like"/>
    <property type="match status" value="1"/>
</dbReference>
<dbReference type="InterPro" id="IPR006640">
    <property type="entry name" value="SprT-like_domain"/>
</dbReference>
<dbReference type="InterPro" id="IPR035240">
    <property type="entry name" value="SprT_Zn_ribbon"/>
</dbReference>
<dbReference type="InterPro" id="IPR023524">
    <property type="entry name" value="Uncharacterised_SprT-like"/>
</dbReference>
<dbReference type="NCBIfam" id="NF003339">
    <property type="entry name" value="PRK04351.1"/>
    <property type="match status" value="1"/>
</dbReference>
<dbReference type="Pfam" id="PF10263">
    <property type="entry name" value="SprT-like"/>
    <property type="match status" value="1"/>
</dbReference>
<dbReference type="Pfam" id="PF17283">
    <property type="entry name" value="Zn_ribbon_SprT"/>
    <property type="match status" value="1"/>
</dbReference>
<dbReference type="SMART" id="SM00731">
    <property type="entry name" value="SprT"/>
    <property type="match status" value="1"/>
</dbReference>
<evidence type="ECO:0000255" key="1">
    <source>
        <dbReference type="HAMAP-Rule" id="MF_00745"/>
    </source>
</evidence>
<sequence>MDEQEIQRLVEEVSLQYFGMPFLHKAMFNSRLRTTGGRYLLNTHNIELNYRYYEMYGKEELVGIVKHELCHYHLHITGRGYKHRDKDFRELLKAVDAPRFCKRMVNAEKEKRVYVYECMECLLQYVRRRQINTKRYVCGKCKGKLNLIKKTS</sequence>
<organism>
    <name type="scientific">Bacillus anthracis (strain CDC 684 / NRRL 3495)</name>
    <dbReference type="NCBI Taxonomy" id="568206"/>
    <lineage>
        <taxon>Bacteria</taxon>
        <taxon>Bacillati</taxon>
        <taxon>Bacillota</taxon>
        <taxon>Bacilli</taxon>
        <taxon>Bacillales</taxon>
        <taxon>Bacillaceae</taxon>
        <taxon>Bacillus</taxon>
        <taxon>Bacillus cereus group</taxon>
    </lineage>
</organism>
<accession>C3LK85</accession>
<protein>
    <recommendedName>
        <fullName evidence="1">Protein SprT-like</fullName>
    </recommendedName>
</protein>
<name>SPRTL_BACAC</name>
<comment type="cofactor">
    <cofactor evidence="1">
        <name>Zn(2+)</name>
        <dbReference type="ChEBI" id="CHEBI:29105"/>
    </cofactor>
    <text evidence="1">Binds 1 zinc ion.</text>
</comment>
<comment type="subcellular location">
    <subcellularLocation>
        <location evidence="1">Cytoplasm</location>
    </subcellularLocation>
</comment>
<comment type="similarity">
    <text evidence="1">Belongs to the SprT family.</text>
</comment>